<sequence length="859" mass="95035">MARRWSTKESPRWRSALLLLFLAGVYGNGALAEHSENVHISGVSTACGETPEQIRAPSGIITSPGWPSEYPAKINCSWFIRANPGEIITISFQDFDIQGSRRCNLDWLTIETYKNIESYRACGSTIPPPYISSQDHIWIRFHSDDNISRKGFRLAYFSGKSEEPNCACDQFRCGNGKCIPEAWKCNNMDECGDSSDEEICAKEANPPTAAAFQPCAYNQFQCLSRFTKVYTCLPESLKCDGNIDCLDLGDEIDCDVPTCGQWLKYFYGTFNSPNYPDFYPPGSNCTWLIDTGDHRKVILRFTDFKLDGTGYGDYVKIYDGLEENPHKLLRVLTAFDSHAPLTVVSSSGQIRVHFCADKVNAARGFNATYQVDGFCLPWEIPCGGNWGCYTEQQRCDGYWHCPNGRDEINCTMCQKEEFPCSRNGVCYPRSDRCNYQNHCPNGSDEKNCFFCQPGNFHCKNNRCVFESWVCDSQDDCGDGSDEENCPVIVPTRVITAAVIGSLICGLLLVIALGCTCKLYSLRMFERRSFETQLSRVEAELLRREAPPSYGQLIAQGLIPPVEDFPVCSPNQASVLENLRLAVRSQLGFTSVRLPMAGRSSNIWNRIFNFARSRHSGSLALVSADGDEVVPSQSTSREPERNHTHRSLFSVESDDTDTENERRDMAGASGGVAAPLPQKVPPTTAVEATVGACASSSTQSTRGGHADNGRDVTSVEPPSVSPARHQLTSALSRMTQGLRWVRFTLGRSSSVSQNQSPLRQLDNGVSGREDDDDVEMLIPISDGSSDFDVNDCSRPLLDLASDQGQGLRQPYNATNPGVRPSNRDGPCERCGIVHTAQIPDTCLEVTLKNETSDDEALLLC</sequence>
<name>LRP12_PONAB</name>
<dbReference type="EMBL" id="CR860634">
    <property type="protein sequence ID" value="CAH92754.1"/>
    <property type="molecule type" value="mRNA"/>
</dbReference>
<dbReference type="EMBL" id="CR860720">
    <property type="protein sequence ID" value="CAH92835.1"/>
    <property type="molecule type" value="mRNA"/>
</dbReference>
<dbReference type="RefSeq" id="NP_001126606.1">
    <property type="nucleotide sequence ID" value="NM_001133134.1"/>
</dbReference>
<dbReference type="RefSeq" id="NP_001128879.1">
    <property type="nucleotide sequence ID" value="NM_001135407.1"/>
</dbReference>
<dbReference type="FunCoup" id="Q5R662">
    <property type="interactions" value="1609"/>
</dbReference>
<dbReference type="STRING" id="9601.ENSPPYP00000021104"/>
<dbReference type="GlyCosmos" id="Q5R662">
    <property type="glycosylation" value="6 sites, No reported glycans"/>
</dbReference>
<dbReference type="Ensembl" id="ENSPPYT00000021947.3">
    <molecule id="Q5R662-2"/>
    <property type="protein sequence ID" value="ENSPPYP00000021104.3"/>
    <property type="gene ID" value="ENSPPYG00000018813.3"/>
</dbReference>
<dbReference type="Ensembl" id="ENSPPYT00000042947.1">
    <molecule id="Q5R662-1"/>
    <property type="protein sequence ID" value="ENSPPYP00000032230.1"/>
    <property type="gene ID" value="ENSPPYG00000018813.3"/>
</dbReference>
<dbReference type="GeneID" id="100173603"/>
<dbReference type="KEGG" id="pon:100173603"/>
<dbReference type="CTD" id="29967"/>
<dbReference type="eggNOG" id="KOG1215">
    <property type="taxonomic scope" value="Eukaryota"/>
</dbReference>
<dbReference type="GeneTree" id="ENSGT00940000158307"/>
<dbReference type="HOGENOM" id="CLU_013747_0_0_1"/>
<dbReference type="InParanoid" id="Q5R662"/>
<dbReference type="OMA" id="SWYIQAN"/>
<dbReference type="OrthoDB" id="10020456at2759"/>
<dbReference type="TreeFam" id="TF332149"/>
<dbReference type="Proteomes" id="UP000001595">
    <property type="component" value="Chromosome 8"/>
</dbReference>
<dbReference type="GO" id="GO:0005905">
    <property type="term" value="C:clathrin-coated pit"/>
    <property type="evidence" value="ECO:0007669"/>
    <property type="project" value="UniProtKB-KW"/>
</dbReference>
<dbReference type="GO" id="GO:0005886">
    <property type="term" value="C:plasma membrane"/>
    <property type="evidence" value="ECO:0007669"/>
    <property type="project" value="Ensembl"/>
</dbReference>
<dbReference type="GO" id="GO:0005178">
    <property type="term" value="F:integrin binding"/>
    <property type="evidence" value="ECO:0007669"/>
    <property type="project" value="Ensembl"/>
</dbReference>
<dbReference type="GO" id="GO:0007155">
    <property type="term" value="P:cell adhesion"/>
    <property type="evidence" value="ECO:0007669"/>
    <property type="project" value="Ensembl"/>
</dbReference>
<dbReference type="GO" id="GO:0006897">
    <property type="term" value="P:endocytosis"/>
    <property type="evidence" value="ECO:0007669"/>
    <property type="project" value="UniProtKB-KW"/>
</dbReference>
<dbReference type="GO" id="GO:0033622">
    <property type="term" value="P:integrin activation"/>
    <property type="evidence" value="ECO:0007669"/>
    <property type="project" value="Ensembl"/>
</dbReference>
<dbReference type="GO" id="GO:0097021">
    <property type="term" value="P:lymphocyte migration into lymphoid organs"/>
    <property type="evidence" value="ECO:0007669"/>
    <property type="project" value="Ensembl"/>
</dbReference>
<dbReference type="GO" id="GO:0001764">
    <property type="term" value="P:neuron migration"/>
    <property type="evidence" value="ECO:0007669"/>
    <property type="project" value="Ensembl"/>
</dbReference>
<dbReference type="GO" id="GO:0031175">
    <property type="term" value="P:neuron projection development"/>
    <property type="evidence" value="ECO:0007669"/>
    <property type="project" value="Ensembl"/>
</dbReference>
<dbReference type="CDD" id="cd00041">
    <property type="entry name" value="CUB"/>
    <property type="match status" value="2"/>
</dbReference>
<dbReference type="CDD" id="cd00112">
    <property type="entry name" value="LDLa"/>
    <property type="match status" value="4"/>
</dbReference>
<dbReference type="FunFam" id="2.60.120.290:FF:000021">
    <property type="entry name" value="Low-density lipoprotein receptor-related protein 12"/>
    <property type="match status" value="1"/>
</dbReference>
<dbReference type="FunFam" id="2.60.120.290:FF:000024">
    <property type="entry name" value="Low-density lipoprotein receptor-related protein 12"/>
    <property type="match status" value="1"/>
</dbReference>
<dbReference type="FunFam" id="4.10.400.10:FF:000063">
    <property type="entry name" value="low-density lipoprotein receptor-related protein 12"/>
    <property type="match status" value="1"/>
</dbReference>
<dbReference type="FunFam" id="4.10.400.10:FF:000040">
    <property type="entry name" value="low-density lipoprotein receptor-related protein 3"/>
    <property type="match status" value="1"/>
</dbReference>
<dbReference type="FunFam" id="4.10.400.10:FF:000003">
    <property type="entry name" value="Putative low-density lipoprotein receptor-related protein 12"/>
    <property type="match status" value="3"/>
</dbReference>
<dbReference type="Gene3D" id="4.10.400.10">
    <property type="entry name" value="Low-density Lipoprotein Receptor"/>
    <property type="match status" value="5"/>
</dbReference>
<dbReference type="Gene3D" id="2.60.120.290">
    <property type="entry name" value="Spermadhesin, CUB domain"/>
    <property type="match status" value="2"/>
</dbReference>
<dbReference type="InterPro" id="IPR000859">
    <property type="entry name" value="CUB_dom"/>
</dbReference>
<dbReference type="InterPro" id="IPR036055">
    <property type="entry name" value="LDL_receptor-like_sf"/>
</dbReference>
<dbReference type="InterPro" id="IPR050685">
    <property type="entry name" value="LDLR"/>
</dbReference>
<dbReference type="InterPro" id="IPR023415">
    <property type="entry name" value="LDLR_class-A_CS"/>
</dbReference>
<dbReference type="InterPro" id="IPR002172">
    <property type="entry name" value="LDrepeatLR_classA_rpt"/>
</dbReference>
<dbReference type="InterPro" id="IPR035914">
    <property type="entry name" value="Sperma_CUB_dom_sf"/>
</dbReference>
<dbReference type="PANTHER" id="PTHR24270">
    <property type="entry name" value="LOW-DENSITY LIPOPROTEIN RECEPTOR-RELATED"/>
    <property type="match status" value="1"/>
</dbReference>
<dbReference type="PANTHER" id="PTHR24270:SF47">
    <property type="entry name" value="LOW-DENSITY LIPOPROTEIN RECEPTOR-RELATED PROTEIN 12"/>
    <property type="match status" value="1"/>
</dbReference>
<dbReference type="Pfam" id="PF00431">
    <property type="entry name" value="CUB"/>
    <property type="match status" value="2"/>
</dbReference>
<dbReference type="Pfam" id="PF00057">
    <property type="entry name" value="Ldl_recept_a"/>
    <property type="match status" value="4"/>
</dbReference>
<dbReference type="PRINTS" id="PR00261">
    <property type="entry name" value="LDLRECEPTOR"/>
</dbReference>
<dbReference type="SMART" id="SM00042">
    <property type="entry name" value="CUB"/>
    <property type="match status" value="2"/>
</dbReference>
<dbReference type="SMART" id="SM00192">
    <property type="entry name" value="LDLa"/>
    <property type="match status" value="5"/>
</dbReference>
<dbReference type="SUPFAM" id="SSF57424">
    <property type="entry name" value="LDL receptor-like module"/>
    <property type="match status" value="5"/>
</dbReference>
<dbReference type="SUPFAM" id="SSF49854">
    <property type="entry name" value="Spermadhesin, CUB domain"/>
    <property type="match status" value="2"/>
</dbReference>
<dbReference type="PROSITE" id="PS01180">
    <property type="entry name" value="CUB"/>
    <property type="match status" value="2"/>
</dbReference>
<dbReference type="PROSITE" id="PS01209">
    <property type="entry name" value="LDLRA_1"/>
    <property type="match status" value="2"/>
</dbReference>
<dbReference type="PROSITE" id="PS50068">
    <property type="entry name" value="LDLRA_2"/>
    <property type="match status" value="5"/>
</dbReference>
<accession>Q5R662</accession>
<accession>Q5R5Y1</accession>
<proteinExistence type="evidence at transcript level"/>
<gene>
    <name type="primary">LRP12</name>
</gene>
<protein>
    <recommendedName>
        <fullName>Low-density lipoprotein receptor-related protein 12</fullName>
        <shortName>LRP-12</shortName>
    </recommendedName>
</protein>
<evidence type="ECO:0000250" key="1"/>
<evidence type="ECO:0000255" key="2"/>
<evidence type="ECO:0000255" key="3">
    <source>
        <dbReference type="PROSITE-ProRule" id="PRU00059"/>
    </source>
</evidence>
<evidence type="ECO:0000255" key="4">
    <source>
        <dbReference type="PROSITE-ProRule" id="PRU00124"/>
    </source>
</evidence>
<evidence type="ECO:0000256" key="5">
    <source>
        <dbReference type="SAM" id="MobiDB-lite"/>
    </source>
</evidence>
<evidence type="ECO:0000303" key="6">
    <source ref="1"/>
</evidence>
<evidence type="ECO:0000305" key="7"/>
<keyword id="KW-0025">Alternative splicing</keyword>
<keyword id="KW-0168">Coated pit</keyword>
<keyword id="KW-1015">Disulfide bond</keyword>
<keyword id="KW-0254">Endocytosis</keyword>
<keyword id="KW-0325">Glycoprotein</keyword>
<keyword id="KW-0472">Membrane</keyword>
<keyword id="KW-0675">Receptor</keyword>
<keyword id="KW-1185">Reference proteome</keyword>
<keyword id="KW-0677">Repeat</keyword>
<keyword id="KW-0732">Signal</keyword>
<keyword id="KW-0812">Transmembrane</keyword>
<keyword id="KW-1133">Transmembrane helix</keyword>
<feature type="signal peptide" evidence="2">
    <location>
        <begin position="1"/>
        <end position="32"/>
    </location>
</feature>
<feature type="chain" id="PRO_0000352672" description="Low-density lipoprotein receptor-related protein 12">
    <location>
        <begin position="33"/>
        <end position="859"/>
    </location>
</feature>
<feature type="topological domain" description="Extracellular" evidence="2">
    <location>
        <begin position="33"/>
        <end position="492"/>
    </location>
</feature>
<feature type="transmembrane region" description="Helical" evidence="2">
    <location>
        <begin position="493"/>
        <end position="513"/>
    </location>
</feature>
<feature type="topological domain" description="Cytoplasmic" evidence="2">
    <location>
        <begin position="514"/>
        <end position="859"/>
    </location>
</feature>
<feature type="domain" description="CUB 1" evidence="3">
    <location>
        <begin position="47"/>
        <end position="159"/>
    </location>
</feature>
<feature type="domain" description="LDL-receptor class A 1" evidence="4">
    <location>
        <begin position="165"/>
        <end position="201"/>
    </location>
</feature>
<feature type="domain" description="LDL-receptor class A 2" evidence="4">
    <location>
        <begin position="214"/>
        <end position="255"/>
    </location>
</feature>
<feature type="domain" description="CUB 2" evidence="3">
    <location>
        <begin position="259"/>
        <end position="372"/>
    </location>
</feature>
<feature type="domain" description="LDL-receptor class A 3" evidence="4">
    <location>
        <begin position="374"/>
        <end position="411"/>
    </location>
</feature>
<feature type="domain" description="LDL-receptor class A 4" evidence="4">
    <location>
        <begin position="412"/>
        <end position="449"/>
    </location>
</feature>
<feature type="domain" description="LDL-receptor class A 5" evidence="4">
    <location>
        <begin position="450"/>
        <end position="486"/>
    </location>
</feature>
<feature type="region of interest" description="Disordered" evidence="5">
    <location>
        <begin position="623"/>
        <end position="678"/>
    </location>
</feature>
<feature type="region of interest" description="Disordered" evidence="5">
    <location>
        <begin position="693"/>
        <end position="723"/>
    </location>
</feature>
<feature type="region of interest" description="Disordered" evidence="5">
    <location>
        <begin position="748"/>
        <end position="770"/>
    </location>
</feature>
<feature type="region of interest" description="Disordered" evidence="5">
    <location>
        <begin position="802"/>
        <end position="823"/>
    </location>
</feature>
<feature type="compositionally biased region" description="Polar residues" evidence="5">
    <location>
        <begin position="748"/>
        <end position="757"/>
    </location>
</feature>
<feature type="compositionally biased region" description="Polar residues" evidence="5">
    <location>
        <begin position="802"/>
        <end position="814"/>
    </location>
</feature>
<feature type="glycosylation site" description="N-linked (GlcNAc...) asparagine" evidence="2">
    <location>
        <position position="75"/>
    </location>
</feature>
<feature type="glycosylation site" description="N-linked (GlcNAc...) asparagine" evidence="2">
    <location>
        <position position="146"/>
    </location>
</feature>
<feature type="glycosylation site" description="N-linked (GlcNAc...) asparagine" evidence="2">
    <location>
        <position position="284"/>
    </location>
</feature>
<feature type="glycosylation site" description="N-linked (GlcNAc...) asparagine" evidence="2">
    <location>
        <position position="366"/>
    </location>
</feature>
<feature type="glycosylation site" description="N-linked (GlcNAc...) asparagine" evidence="2">
    <location>
        <position position="409"/>
    </location>
</feature>
<feature type="glycosylation site" description="N-linked (GlcNAc...) asparagine" evidence="2">
    <location>
        <position position="441"/>
    </location>
</feature>
<feature type="disulfide bond" evidence="1">
    <location>
        <begin position="47"/>
        <end position="76"/>
    </location>
</feature>
<feature type="disulfide bond" evidence="1">
    <location>
        <begin position="103"/>
        <end position="122"/>
    </location>
</feature>
<feature type="disulfide bond" evidence="1">
    <location>
        <begin position="166"/>
        <end position="178"/>
    </location>
</feature>
<feature type="disulfide bond" evidence="1">
    <location>
        <begin position="173"/>
        <end position="191"/>
    </location>
</feature>
<feature type="disulfide bond" evidence="1">
    <location>
        <begin position="185"/>
        <end position="200"/>
    </location>
</feature>
<feature type="disulfide bond" evidence="1">
    <location>
        <begin position="215"/>
        <end position="232"/>
    </location>
</feature>
<feature type="disulfide bond" evidence="1">
    <location>
        <begin position="222"/>
        <end position="245"/>
    </location>
</feature>
<feature type="disulfide bond" evidence="1">
    <location>
        <begin position="239"/>
        <end position="254"/>
    </location>
</feature>
<feature type="disulfide bond" evidence="1">
    <location>
        <begin position="259"/>
        <end position="285"/>
    </location>
</feature>
<feature type="disulfide bond" evidence="1">
    <location>
        <begin position="375"/>
        <end position="388"/>
    </location>
</feature>
<feature type="disulfide bond" evidence="1">
    <location>
        <begin position="382"/>
        <end position="401"/>
    </location>
</feature>
<feature type="disulfide bond" evidence="1">
    <location>
        <begin position="395"/>
        <end position="410"/>
    </location>
</feature>
<feature type="disulfide bond" evidence="1">
    <location>
        <begin position="413"/>
        <end position="426"/>
    </location>
</feature>
<feature type="disulfide bond" evidence="1">
    <location>
        <begin position="420"/>
        <end position="439"/>
    </location>
</feature>
<feature type="disulfide bond" evidence="1">
    <location>
        <begin position="433"/>
        <end position="448"/>
    </location>
</feature>
<feature type="disulfide bond" evidence="1">
    <location>
        <begin position="451"/>
        <end position="463"/>
    </location>
</feature>
<feature type="disulfide bond" evidence="1">
    <location>
        <begin position="458"/>
        <end position="476"/>
    </location>
</feature>
<feature type="disulfide bond" evidence="1">
    <location>
        <begin position="470"/>
        <end position="485"/>
    </location>
</feature>
<feature type="splice variant" id="VSP_035578" description="In isoform 2." evidence="6">
    <location>
        <begin position="27"/>
        <end position="45"/>
    </location>
</feature>
<feature type="sequence conflict" description="In Ref. 1; CAH92835." evidence="7" ref="1">
    <original>W</original>
    <variation>R</variation>
    <location>
        <position position="66"/>
    </location>
</feature>
<feature type="sequence conflict" description="In Ref. 1; CAH92835." evidence="7" ref="1">
    <original>R</original>
    <variation>S</variation>
    <location>
        <position position="140"/>
    </location>
</feature>
<feature type="sequence conflict" description="In Ref. 1; CAH92754." evidence="7" ref="1">
    <original>Q</original>
    <variation>H</variation>
    <location>
        <position position="452"/>
    </location>
</feature>
<feature type="sequence conflict" description="In Ref. 1; CAH92754." evidence="7" ref="1">
    <original>N</original>
    <variation>S</variation>
    <location>
        <position position="608"/>
    </location>
</feature>
<reference key="1">
    <citation type="submission" date="2004-11" db="EMBL/GenBank/DDBJ databases">
        <authorList>
            <consortium name="The German cDNA consortium"/>
        </authorList>
    </citation>
    <scope>NUCLEOTIDE SEQUENCE [LARGE SCALE MRNA] (ISOFORMS 1 AND 2)</scope>
    <source>
        <tissue>Brain cortex</tissue>
    </source>
</reference>
<comment type="function">
    <text evidence="1">Probable receptor, which may be involved in the internalization of lipophilic molecules and/or signal transduction. May act as a tumor suppressor (By similarity).</text>
</comment>
<comment type="subunit">
    <text evidence="1">May interact with RACK1, ZFYVE9 and NMRK2.</text>
</comment>
<comment type="subcellular location">
    <subcellularLocation>
        <location evidence="1">Membrane</location>
        <topology evidence="1">Single-pass type I membrane protein</topology>
    </subcellularLocation>
    <subcellularLocation>
        <location evidence="1">Membrane</location>
        <location evidence="1">Coated pit</location>
    </subcellularLocation>
</comment>
<comment type="alternative products">
    <event type="alternative splicing"/>
    <isoform>
        <id>Q5R662-1</id>
        <name>1</name>
        <sequence type="displayed"/>
    </isoform>
    <isoform>
        <id>Q5R662-2</id>
        <name>2</name>
        <sequence type="described" ref="VSP_035578"/>
    </isoform>
</comment>
<comment type="similarity">
    <text evidence="7">Belongs to the LDLR family.</text>
</comment>
<organism>
    <name type="scientific">Pongo abelii</name>
    <name type="common">Sumatran orangutan</name>
    <name type="synonym">Pongo pygmaeus abelii</name>
    <dbReference type="NCBI Taxonomy" id="9601"/>
    <lineage>
        <taxon>Eukaryota</taxon>
        <taxon>Metazoa</taxon>
        <taxon>Chordata</taxon>
        <taxon>Craniata</taxon>
        <taxon>Vertebrata</taxon>
        <taxon>Euteleostomi</taxon>
        <taxon>Mammalia</taxon>
        <taxon>Eutheria</taxon>
        <taxon>Euarchontoglires</taxon>
        <taxon>Primates</taxon>
        <taxon>Haplorrhini</taxon>
        <taxon>Catarrhini</taxon>
        <taxon>Hominidae</taxon>
        <taxon>Pongo</taxon>
    </lineage>
</organism>